<evidence type="ECO:0000255" key="1">
    <source>
        <dbReference type="HAMAP-Rule" id="MF_00059"/>
    </source>
</evidence>
<evidence type="ECO:0000256" key="2">
    <source>
        <dbReference type="SAM" id="MobiDB-lite"/>
    </source>
</evidence>
<reference key="1">
    <citation type="submission" date="2006-06" db="EMBL/GenBank/DDBJ databases">
        <title>Complete sequence of chromosome of Mycobacterium sp. MCS.</title>
        <authorList>
            <consortium name="US DOE Joint Genome Institute"/>
            <person name="Copeland A."/>
            <person name="Lucas S."/>
            <person name="Lapidus A."/>
            <person name="Barry K."/>
            <person name="Detter J.C."/>
            <person name="Glavina del Rio T."/>
            <person name="Hammon N."/>
            <person name="Israni S."/>
            <person name="Dalin E."/>
            <person name="Tice H."/>
            <person name="Pitluck S."/>
            <person name="Martinez M."/>
            <person name="Schmutz J."/>
            <person name="Larimer F."/>
            <person name="Land M."/>
            <person name="Hauser L."/>
            <person name="Kyrpides N."/>
            <person name="Kim E."/>
            <person name="Miller C.D."/>
            <person name="Hughes J.E."/>
            <person name="Anderson A.J."/>
            <person name="Sims R.C."/>
            <person name="Richardson P."/>
        </authorList>
    </citation>
    <scope>NUCLEOTIDE SEQUENCE [LARGE SCALE GENOMIC DNA]</scope>
    <source>
        <strain>MCS</strain>
    </source>
</reference>
<keyword id="KW-0240">DNA-directed RNA polymerase</keyword>
<keyword id="KW-0548">Nucleotidyltransferase</keyword>
<keyword id="KW-0804">Transcription</keyword>
<keyword id="KW-0808">Transferase</keyword>
<dbReference type="EC" id="2.7.7.6" evidence="1"/>
<dbReference type="EMBL" id="CP000384">
    <property type="protein sequence ID" value="ABG07226.1"/>
    <property type="molecule type" value="Genomic_DNA"/>
</dbReference>
<dbReference type="SMR" id="Q1BD08"/>
<dbReference type="KEGG" id="mmc:Mmcs_1113"/>
<dbReference type="HOGENOM" id="CLU_053084_0_1_11"/>
<dbReference type="BioCyc" id="MSP164756:G1G6O-1139-MONOMER"/>
<dbReference type="GO" id="GO:0005737">
    <property type="term" value="C:cytoplasm"/>
    <property type="evidence" value="ECO:0007669"/>
    <property type="project" value="UniProtKB-ARBA"/>
</dbReference>
<dbReference type="GO" id="GO:0000428">
    <property type="term" value="C:DNA-directed RNA polymerase complex"/>
    <property type="evidence" value="ECO:0007669"/>
    <property type="project" value="UniProtKB-KW"/>
</dbReference>
<dbReference type="GO" id="GO:0003677">
    <property type="term" value="F:DNA binding"/>
    <property type="evidence" value="ECO:0007669"/>
    <property type="project" value="UniProtKB-UniRule"/>
</dbReference>
<dbReference type="GO" id="GO:0003899">
    <property type="term" value="F:DNA-directed RNA polymerase activity"/>
    <property type="evidence" value="ECO:0007669"/>
    <property type="project" value="UniProtKB-UniRule"/>
</dbReference>
<dbReference type="GO" id="GO:0046983">
    <property type="term" value="F:protein dimerization activity"/>
    <property type="evidence" value="ECO:0007669"/>
    <property type="project" value="InterPro"/>
</dbReference>
<dbReference type="GO" id="GO:0006351">
    <property type="term" value="P:DNA-templated transcription"/>
    <property type="evidence" value="ECO:0007669"/>
    <property type="project" value="UniProtKB-UniRule"/>
</dbReference>
<dbReference type="CDD" id="cd06928">
    <property type="entry name" value="RNAP_alpha_NTD"/>
    <property type="match status" value="1"/>
</dbReference>
<dbReference type="FunFam" id="1.10.150.20:FF:000001">
    <property type="entry name" value="DNA-directed RNA polymerase subunit alpha"/>
    <property type="match status" value="1"/>
</dbReference>
<dbReference type="FunFam" id="2.170.120.12:FF:000001">
    <property type="entry name" value="DNA-directed RNA polymerase subunit alpha"/>
    <property type="match status" value="1"/>
</dbReference>
<dbReference type="Gene3D" id="1.10.150.20">
    <property type="entry name" value="5' to 3' exonuclease, C-terminal subdomain"/>
    <property type="match status" value="1"/>
</dbReference>
<dbReference type="Gene3D" id="2.170.120.12">
    <property type="entry name" value="DNA-directed RNA polymerase, insert domain"/>
    <property type="match status" value="1"/>
</dbReference>
<dbReference type="Gene3D" id="3.30.1360.10">
    <property type="entry name" value="RNA polymerase, RBP11-like subunit"/>
    <property type="match status" value="1"/>
</dbReference>
<dbReference type="HAMAP" id="MF_00059">
    <property type="entry name" value="RNApol_bact_RpoA"/>
    <property type="match status" value="1"/>
</dbReference>
<dbReference type="InterPro" id="IPR011262">
    <property type="entry name" value="DNA-dir_RNA_pol_insert"/>
</dbReference>
<dbReference type="InterPro" id="IPR011263">
    <property type="entry name" value="DNA-dir_RNA_pol_RpoA/D/Rpb3"/>
</dbReference>
<dbReference type="InterPro" id="IPR011773">
    <property type="entry name" value="DNA-dir_RpoA"/>
</dbReference>
<dbReference type="InterPro" id="IPR036603">
    <property type="entry name" value="RBP11-like"/>
</dbReference>
<dbReference type="InterPro" id="IPR011260">
    <property type="entry name" value="RNAP_asu_C"/>
</dbReference>
<dbReference type="InterPro" id="IPR036643">
    <property type="entry name" value="RNApol_insert_sf"/>
</dbReference>
<dbReference type="NCBIfam" id="NF003513">
    <property type="entry name" value="PRK05182.1-2"/>
    <property type="match status" value="1"/>
</dbReference>
<dbReference type="NCBIfam" id="NF003514">
    <property type="entry name" value="PRK05182.1-4"/>
    <property type="match status" value="1"/>
</dbReference>
<dbReference type="NCBIfam" id="NF003519">
    <property type="entry name" value="PRK05182.2-5"/>
    <property type="match status" value="1"/>
</dbReference>
<dbReference type="NCBIfam" id="TIGR02027">
    <property type="entry name" value="rpoA"/>
    <property type="match status" value="1"/>
</dbReference>
<dbReference type="Pfam" id="PF01000">
    <property type="entry name" value="RNA_pol_A_bac"/>
    <property type="match status" value="1"/>
</dbReference>
<dbReference type="Pfam" id="PF03118">
    <property type="entry name" value="RNA_pol_A_CTD"/>
    <property type="match status" value="1"/>
</dbReference>
<dbReference type="Pfam" id="PF01193">
    <property type="entry name" value="RNA_pol_L"/>
    <property type="match status" value="1"/>
</dbReference>
<dbReference type="SMART" id="SM00662">
    <property type="entry name" value="RPOLD"/>
    <property type="match status" value="1"/>
</dbReference>
<dbReference type="SUPFAM" id="SSF47789">
    <property type="entry name" value="C-terminal domain of RNA polymerase alpha subunit"/>
    <property type="match status" value="1"/>
</dbReference>
<dbReference type="SUPFAM" id="SSF56553">
    <property type="entry name" value="Insert subdomain of RNA polymerase alpha subunit"/>
    <property type="match status" value="1"/>
</dbReference>
<dbReference type="SUPFAM" id="SSF55257">
    <property type="entry name" value="RBP11-like subunits of RNA polymerase"/>
    <property type="match status" value="1"/>
</dbReference>
<feature type="chain" id="PRO_0000264517" description="DNA-directed RNA polymerase subunit alpha">
    <location>
        <begin position="1"/>
        <end position="350"/>
    </location>
</feature>
<feature type="region of interest" description="Alpha N-terminal domain (alpha-NTD)" evidence="1">
    <location>
        <begin position="1"/>
        <end position="226"/>
    </location>
</feature>
<feature type="region of interest" description="Alpha C-terminal domain (alpha-CTD)" evidence="1">
    <location>
        <begin position="241"/>
        <end position="350"/>
    </location>
</feature>
<feature type="region of interest" description="Disordered" evidence="2">
    <location>
        <begin position="326"/>
        <end position="350"/>
    </location>
</feature>
<feature type="compositionally biased region" description="Acidic residues" evidence="2">
    <location>
        <begin position="336"/>
        <end position="350"/>
    </location>
</feature>
<proteinExistence type="inferred from homology"/>
<accession>Q1BD08</accession>
<organism>
    <name type="scientific">Mycobacterium sp. (strain MCS)</name>
    <dbReference type="NCBI Taxonomy" id="164756"/>
    <lineage>
        <taxon>Bacteria</taxon>
        <taxon>Bacillati</taxon>
        <taxon>Actinomycetota</taxon>
        <taxon>Actinomycetes</taxon>
        <taxon>Mycobacteriales</taxon>
        <taxon>Mycobacteriaceae</taxon>
        <taxon>Mycobacterium</taxon>
    </lineage>
</organism>
<protein>
    <recommendedName>
        <fullName evidence="1">DNA-directed RNA polymerase subunit alpha</fullName>
        <shortName evidence="1">RNAP subunit alpha</shortName>
        <ecNumber evidence="1">2.7.7.6</ecNumber>
    </recommendedName>
    <alternativeName>
        <fullName evidence="1">RNA polymerase subunit alpha</fullName>
    </alternativeName>
    <alternativeName>
        <fullName evidence="1">Transcriptase subunit alpha</fullName>
    </alternativeName>
</protein>
<gene>
    <name evidence="1" type="primary">rpoA</name>
    <name type="ordered locus">Mmcs_1113</name>
</gene>
<sequence>MLISQRPTLSEETVADNRSRFVIEPLEPGFGYTLGNSLRRTLLSSIPGAAVTSIRIDGVLHEFTTVPGVKEDVTDIILNLKSLVVSSEEDEPVTMYLRKQGPGEVTAGDIVPPAGVTVHNPEMHIATLNDKGKLEVELVVERGRGYVPAVQNKASGAEIGRIPVDSIYSPVLKVTYKVEATRVEQRTDFDKLILDVETKNSITPRDALASAGKTLVELFGLARELNVEAEGIEIGPSPAEADHIASFALPIDDLDLTVRSYNCLKREGVHTVGELVARTESDLLDIRNFGQKSIDEVKIKLHQLGLSLKDSPATFDPSEVAGYDAATGTWNSDAGYDLEDNQDYAETEQL</sequence>
<comment type="function">
    <text evidence="1">DNA-dependent RNA polymerase catalyzes the transcription of DNA into RNA using the four ribonucleoside triphosphates as substrates.</text>
</comment>
<comment type="catalytic activity">
    <reaction evidence="1">
        <text>RNA(n) + a ribonucleoside 5'-triphosphate = RNA(n+1) + diphosphate</text>
        <dbReference type="Rhea" id="RHEA:21248"/>
        <dbReference type="Rhea" id="RHEA-COMP:14527"/>
        <dbReference type="Rhea" id="RHEA-COMP:17342"/>
        <dbReference type="ChEBI" id="CHEBI:33019"/>
        <dbReference type="ChEBI" id="CHEBI:61557"/>
        <dbReference type="ChEBI" id="CHEBI:140395"/>
        <dbReference type="EC" id="2.7.7.6"/>
    </reaction>
</comment>
<comment type="subunit">
    <text evidence="1">Homodimer. The RNAP catalytic core consists of 2 alpha, 1 beta, 1 beta' and 1 omega subunit. When a sigma factor is associated with the core the holoenzyme is formed, which can initiate transcription.</text>
</comment>
<comment type="domain">
    <text evidence="1">The N-terminal domain is essential for RNAP assembly and basal transcription, whereas the C-terminal domain is involved in interaction with transcriptional regulators and with upstream promoter elements.</text>
</comment>
<comment type="similarity">
    <text evidence="1">Belongs to the RNA polymerase alpha chain family.</text>
</comment>
<name>RPOA_MYCSS</name>